<organism>
    <name type="scientific">Mus musculus</name>
    <name type="common">Mouse</name>
    <dbReference type="NCBI Taxonomy" id="10090"/>
    <lineage>
        <taxon>Eukaryota</taxon>
        <taxon>Metazoa</taxon>
        <taxon>Chordata</taxon>
        <taxon>Craniata</taxon>
        <taxon>Vertebrata</taxon>
        <taxon>Euteleostomi</taxon>
        <taxon>Mammalia</taxon>
        <taxon>Eutheria</taxon>
        <taxon>Euarchontoglires</taxon>
        <taxon>Glires</taxon>
        <taxon>Rodentia</taxon>
        <taxon>Myomorpha</taxon>
        <taxon>Muroidea</taxon>
        <taxon>Muridae</taxon>
        <taxon>Murinae</taxon>
        <taxon>Mus</taxon>
        <taxon>Mus</taxon>
    </lineage>
</organism>
<feature type="chain" id="PRO_0000239955" description="Vomeronasal type-1 receptor 51">
    <location>
        <begin position="1"/>
        <end position="319"/>
    </location>
</feature>
<feature type="topological domain" description="Extracellular" evidence="1">
    <location>
        <begin position="1"/>
        <end position="31"/>
    </location>
</feature>
<feature type="transmembrane region" description="Helical; Name=1" evidence="1">
    <location>
        <begin position="32"/>
        <end position="52"/>
    </location>
</feature>
<feature type="topological domain" description="Cytoplasmic" evidence="1">
    <location>
        <begin position="53"/>
        <end position="65"/>
    </location>
</feature>
<feature type="transmembrane region" description="Helical; Name=2" evidence="1">
    <location>
        <begin position="66"/>
        <end position="86"/>
    </location>
</feature>
<feature type="topological domain" description="Extracellular" evidence="1">
    <location>
        <begin position="87"/>
        <end position="109"/>
    </location>
</feature>
<feature type="transmembrane region" description="Helical; Name=3" evidence="1">
    <location>
        <begin position="110"/>
        <end position="130"/>
    </location>
</feature>
<feature type="topological domain" description="Cytoplasmic" evidence="1">
    <location>
        <begin position="131"/>
        <end position="150"/>
    </location>
</feature>
<feature type="transmembrane region" description="Helical; Name=4" evidence="1">
    <location>
        <begin position="151"/>
        <end position="171"/>
    </location>
</feature>
<feature type="topological domain" description="Extracellular" evidence="1">
    <location>
        <begin position="172"/>
        <end position="203"/>
    </location>
</feature>
<feature type="transmembrane region" description="Helical; Name=5" evidence="1">
    <location>
        <begin position="204"/>
        <end position="224"/>
    </location>
</feature>
<feature type="topological domain" description="Cytoplasmic" evidence="1">
    <location>
        <begin position="225"/>
        <end position="254"/>
    </location>
</feature>
<feature type="transmembrane region" description="Helical; Name=6" evidence="1">
    <location>
        <begin position="255"/>
        <end position="275"/>
    </location>
</feature>
<feature type="topological domain" description="Extracellular" evidence="1">
    <location>
        <begin position="276"/>
        <end position="285"/>
    </location>
</feature>
<feature type="transmembrane region" description="Helical; Name=7" evidence="1">
    <location>
        <begin position="286"/>
        <end position="306"/>
    </location>
</feature>
<feature type="topological domain" description="Cytoplasmic" evidence="1">
    <location>
        <begin position="307"/>
        <end position="319"/>
    </location>
</feature>
<feature type="glycosylation site" description="N-linked (GlcNAc...) asparagine" evidence="1">
    <location>
        <position position="175"/>
    </location>
</feature>
<feature type="disulfide bond" evidence="2">
    <location>
        <begin position="101"/>
        <end position="188"/>
    </location>
</feature>
<feature type="sequence conflict" description="In Ref. 1; CAA73257." evidence="5" ref="1">
    <original>M</original>
    <variation>MM</variation>
    <location>
        <position position="17"/>
    </location>
</feature>
<sequence length="319" mass="36533">MNEILFFSPQPLFSHMMNENSRVHTHSNLRHIFFSEIGIGISGNSFLLLFHILKFIHGHRSRLSDLPIGLLSLIHLLMLLVMAFIATDIFISWRGWDDIICKFLVYLYRVLRGLSLCTTSMLSVLQAIILSPRSSCLAKFKRKSLHHISCAILFLSVLYMLIGSQLLVSIIATPNLTTNDFIYVTQSCSILPLSYVMQSMFSTLLVIRDVFLISLMVLSTWYMVALLCRHRKKTQHLQGISLSPKTSPKQRATQTLLMLMSFFVLMTIYDTIVSCSRTMFLNDPTSYNMQIFVVHIYATVSPFVFMSTEKHIVNCLRSV</sequence>
<name>V1R51_MOUSE</name>
<protein>
    <recommendedName>
        <fullName>Vomeronasal type-1 receptor 51</fullName>
    </recommendedName>
    <alternativeName>
        <fullName>Pheromone receptor 1</fullName>
    </alternativeName>
    <alternativeName>
        <fullName>Vomeronasal type-1 receptor A1</fullName>
        <shortName>mV1R1</shortName>
    </alternativeName>
    <alternativeName>
        <fullName>Vomeronasal type-1 receptor A8</fullName>
    </alternativeName>
</protein>
<gene>
    <name type="primary">Vmn1r51</name>
    <name evidence="9" type="synonym">Pr1</name>
    <name type="synonym">V1ra1</name>
    <name evidence="8" type="synonym">V1ra8</name>
</gene>
<keyword id="KW-1003">Cell membrane</keyword>
<keyword id="KW-1015">Disulfide bond</keyword>
<keyword id="KW-0297">G-protein coupled receptor</keyword>
<keyword id="KW-0325">Glycoprotein</keyword>
<keyword id="KW-0472">Membrane</keyword>
<keyword id="KW-0589">Pheromone response</keyword>
<keyword id="KW-0675">Receptor</keyword>
<keyword id="KW-1185">Reference proteome</keyword>
<keyword id="KW-0807">Transducer</keyword>
<keyword id="KW-0812">Transmembrane</keyword>
<keyword id="KW-1133">Transmembrane helix</keyword>
<accession>Q8VIC6</accession>
<accession>Q9EPA4</accession>
<accession>Q9Z195</accession>
<dbReference type="EMBL" id="Y12725">
    <property type="protein sequence ID" value="CAA73257.1"/>
    <property type="status" value="ALT_INIT"/>
    <property type="molecule type" value="mRNA"/>
</dbReference>
<dbReference type="EMBL" id="AF129005">
    <property type="protein sequence ID" value="AAG43249.1"/>
    <property type="status" value="ALT_INIT"/>
    <property type="molecule type" value="Genomic_DNA"/>
</dbReference>
<dbReference type="EMBL" id="AB062897">
    <property type="protein sequence ID" value="BAB79215.1"/>
    <property type="status" value="ALT_INIT"/>
    <property type="molecule type" value="Genomic_DNA"/>
</dbReference>
<dbReference type="EMBL" id="AF291481">
    <property type="protein sequence ID" value="AAG42075.1"/>
    <property type="molecule type" value="Genomic_DNA"/>
</dbReference>
<dbReference type="RefSeq" id="NP_035813.2">
    <property type="nucleotide sequence ID" value="NM_011683.2"/>
</dbReference>
<dbReference type="SMR" id="Q8VIC6"/>
<dbReference type="STRING" id="10090.ENSMUSP00000153783"/>
<dbReference type="GlyCosmos" id="Q8VIC6">
    <property type="glycosylation" value="1 site, No reported glycans"/>
</dbReference>
<dbReference type="GlyGen" id="Q8VIC6">
    <property type="glycosylation" value="1 site"/>
</dbReference>
<dbReference type="PaxDb" id="10090-ENSMUSP00000133870"/>
<dbReference type="DNASU" id="22296"/>
<dbReference type="GeneID" id="22296"/>
<dbReference type="KEGG" id="mmu:22296"/>
<dbReference type="AGR" id="MGI:1333759"/>
<dbReference type="CTD" id="22296"/>
<dbReference type="MGI" id="MGI:1333759">
    <property type="gene designation" value="Vmn1r51"/>
</dbReference>
<dbReference type="eggNOG" id="ENOG502SNRJ">
    <property type="taxonomic scope" value="Eukaryota"/>
</dbReference>
<dbReference type="InParanoid" id="Q8VIC6"/>
<dbReference type="OrthoDB" id="9606139at2759"/>
<dbReference type="PhylomeDB" id="Q8VIC6"/>
<dbReference type="BioGRID-ORCS" id="22296">
    <property type="hits" value="1 hit in 73 CRISPR screens"/>
</dbReference>
<dbReference type="PRO" id="PR:Q8VIC6"/>
<dbReference type="Proteomes" id="UP000000589">
    <property type="component" value="Unplaced"/>
</dbReference>
<dbReference type="RNAct" id="Q8VIC6">
    <property type="molecule type" value="protein"/>
</dbReference>
<dbReference type="GO" id="GO:0005886">
    <property type="term" value="C:plasma membrane"/>
    <property type="evidence" value="ECO:0007669"/>
    <property type="project" value="UniProtKB-SubCell"/>
</dbReference>
<dbReference type="GO" id="GO:0016503">
    <property type="term" value="F:pheromone receptor activity"/>
    <property type="evidence" value="ECO:0007669"/>
    <property type="project" value="InterPro"/>
</dbReference>
<dbReference type="GO" id="GO:0019236">
    <property type="term" value="P:response to pheromone"/>
    <property type="evidence" value="ECO:0007669"/>
    <property type="project" value="UniProtKB-KW"/>
</dbReference>
<dbReference type="GO" id="GO:0007606">
    <property type="term" value="P:sensory perception of chemical stimulus"/>
    <property type="evidence" value="ECO:0007669"/>
    <property type="project" value="UniProtKB-ARBA"/>
</dbReference>
<dbReference type="CDD" id="cd13949">
    <property type="entry name" value="7tm_V1R_pheromone"/>
    <property type="match status" value="1"/>
</dbReference>
<dbReference type="FunFam" id="1.20.1070.10:FF:000051">
    <property type="entry name" value="Vomeronasal type-1 receptor"/>
    <property type="match status" value="1"/>
</dbReference>
<dbReference type="Gene3D" id="1.20.1070.10">
    <property type="entry name" value="Rhodopsin 7-helix transmembrane proteins"/>
    <property type="match status" value="1"/>
</dbReference>
<dbReference type="InterPro" id="IPR017452">
    <property type="entry name" value="GPCR_Rhodpsn_7TM"/>
</dbReference>
<dbReference type="InterPro" id="IPR004072">
    <property type="entry name" value="Vmron_rcpt_1"/>
</dbReference>
<dbReference type="PANTHER" id="PTHR24062">
    <property type="entry name" value="VOMERONASAL TYPE-1 RECEPTOR"/>
    <property type="match status" value="1"/>
</dbReference>
<dbReference type="Pfam" id="PF03402">
    <property type="entry name" value="V1R"/>
    <property type="match status" value="1"/>
</dbReference>
<dbReference type="PRINTS" id="PR01534">
    <property type="entry name" value="VOMERONASL1R"/>
</dbReference>
<dbReference type="SUPFAM" id="SSF81321">
    <property type="entry name" value="Family A G protein-coupled receptor-like"/>
    <property type="match status" value="1"/>
</dbReference>
<dbReference type="PROSITE" id="PS50262">
    <property type="entry name" value="G_PROTEIN_RECEP_F1_2"/>
    <property type="match status" value="1"/>
</dbReference>
<comment type="function">
    <text evidence="3">Putative pheromone receptor implicated in the regulation of social as well as reproductive behavior.</text>
</comment>
<comment type="subcellular location">
    <subcellularLocation>
        <location evidence="5">Cell membrane</location>
        <topology evidence="1">Multi-pass membrane protein</topology>
    </subcellularLocation>
</comment>
<comment type="tissue specificity">
    <text evidence="4">Expressed in a subset of sensory neurons located in the apical layer of the vomeronasal organ.</text>
</comment>
<comment type="disruption phenotype">
    <text evidence="3">Mice lacking all but one V1ra and V1rb gene (12% of the V1r repertoire) show a lack of chemosensory response to a subset of known pheromonal ligands and changes in maternal aggression as well as male reproductive behavior.</text>
</comment>
<comment type="similarity">
    <text evidence="2">Belongs to the G-protein coupled receptor 1 family.</text>
</comment>
<comment type="sequence caution" evidence="5">
    <conflict type="erroneous initiation">
        <sequence resource="EMBL-CDS" id="AAG43249"/>
    </conflict>
</comment>
<comment type="sequence caution" evidence="5">
    <conflict type="erroneous initiation">
        <sequence resource="EMBL-CDS" id="BAB79215"/>
    </conflict>
</comment>
<comment type="sequence caution" evidence="5">
    <conflict type="erroneous initiation">
        <sequence resource="EMBL-CDS" id="CAA73257"/>
    </conflict>
</comment>
<proteinExistence type="evidence at transcript level"/>
<evidence type="ECO:0000255" key="1"/>
<evidence type="ECO:0000255" key="2">
    <source>
        <dbReference type="PROSITE-ProRule" id="PRU00521"/>
    </source>
</evidence>
<evidence type="ECO:0000269" key="3">
    <source>
    </source>
</evidence>
<evidence type="ECO:0000269" key="4">
    <source>
    </source>
</evidence>
<evidence type="ECO:0000305" key="5"/>
<evidence type="ECO:0000312" key="6">
    <source>
        <dbReference type="EMBL" id="AAG42075.1"/>
    </source>
</evidence>
<evidence type="ECO:0000312" key="7">
    <source>
        <dbReference type="EMBL" id="AAG43249.1"/>
    </source>
</evidence>
<evidence type="ECO:0000312" key="8">
    <source>
        <dbReference type="EMBL" id="BAB79215.1"/>
    </source>
</evidence>
<evidence type="ECO:0000312" key="9">
    <source>
        <dbReference type="EMBL" id="CAA73257.1"/>
    </source>
</evidence>
<reference evidence="5 9" key="1">
    <citation type="journal article" date="1998" name="Brain Res. Mol. Brain Res.">
        <title>Isolation of mouse vomeronasal receptor genes and their co-localization with specific G-protein messenger RNAs.</title>
        <authorList>
            <person name="Saito H."/>
            <person name="Mimmack M.L."/>
            <person name="Keverne E.B."/>
            <person name="Kishimoto J."/>
            <person name="Emson P.C."/>
        </authorList>
    </citation>
    <scope>NUCLEOTIDE SEQUENCE [MRNA]</scope>
    <scope>TISSUE SPECIFICITY</scope>
    <source>
        <strain evidence="9">BALB/cJ</strain>
    </source>
</reference>
<reference evidence="7" key="2">
    <citation type="journal article" date="2002" name="Proc. Natl. Acad. Sci. U.S.A.">
        <title>Sequence analysis of mouse vomeronasal receptor gene clusters reveals common promoter motifs and a history of recent expansion.</title>
        <authorList>
            <person name="Lane R.P."/>
            <person name="Cutforth T."/>
            <person name="Axel R."/>
            <person name="Hood L."/>
            <person name="Trask B.J."/>
        </authorList>
    </citation>
    <scope>NUCLEOTIDE SEQUENCE [GENOMIC DNA]</scope>
</reference>
<reference evidence="8" key="3">
    <citation type="submission" date="2001-06" db="EMBL/GenBank/DDBJ databases">
        <title>Vomeronasal receptor gene diversity in the mammalian genome.</title>
        <authorList>
            <person name="Sam M."/>
            <person name="Matsunami H."/>
            <person name="Buck L."/>
        </authorList>
    </citation>
    <scope>NUCLEOTIDE SEQUENCE [GENOMIC DNA]</scope>
</reference>
<reference evidence="6" key="4">
    <citation type="journal article" date="2000" name="Genome Res.">
        <title>Sequence diversity and genomic organization of vomeronasal receptor genes in the mouse.</title>
        <authorList>
            <person name="Del Punta K."/>
            <person name="Rothman A."/>
            <person name="Rodriguez I."/>
            <person name="Mombaerts P."/>
        </authorList>
    </citation>
    <scope>NUCLEOTIDE SEQUENCE [GENOMIC DNA] OF 17-319</scope>
    <source>
        <strain evidence="6">129/SvJ</strain>
    </source>
</reference>
<reference evidence="5" key="5">
    <citation type="journal article" date="2002" name="Nature">
        <title>Deficient pheromone responses in mice lacking a cluster of vomeronasal receptor genes.</title>
        <authorList>
            <person name="Del Punta K."/>
            <person name="Leinders-Zufall T."/>
            <person name="Rodriguez I."/>
            <person name="Jukam D."/>
            <person name="Wysocki C.J."/>
            <person name="Ogawa S."/>
            <person name="Zufall F."/>
            <person name="Mombaerts P."/>
        </authorList>
    </citation>
    <scope>PUTATIVE FUNCTION</scope>
    <scope>DISRUPTION PHENOTYPE</scope>
</reference>